<accession>Q4K9V0</accession>
<protein>
    <recommendedName>
        <fullName evidence="1">Aspartate/glutamate leucyltransferase</fullName>
        <ecNumber evidence="1">2.3.2.29</ecNumber>
    </recommendedName>
</protein>
<comment type="function">
    <text evidence="1">Functions in the N-end rule pathway of protein degradation where it conjugates Leu from its aminoacyl-tRNA to the N-termini of proteins containing an N-terminal aspartate or glutamate.</text>
</comment>
<comment type="catalytic activity">
    <reaction evidence="1">
        <text>N-terminal L-glutamyl-[protein] + L-leucyl-tRNA(Leu) = N-terminal L-leucyl-L-glutamyl-[protein] + tRNA(Leu) + H(+)</text>
        <dbReference type="Rhea" id="RHEA:50412"/>
        <dbReference type="Rhea" id="RHEA-COMP:9613"/>
        <dbReference type="Rhea" id="RHEA-COMP:9622"/>
        <dbReference type="Rhea" id="RHEA-COMP:12664"/>
        <dbReference type="Rhea" id="RHEA-COMP:12668"/>
        <dbReference type="ChEBI" id="CHEBI:15378"/>
        <dbReference type="ChEBI" id="CHEBI:64721"/>
        <dbReference type="ChEBI" id="CHEBI:78442"/>
        <dbReference type="ChEBI" id="CHEBI:78494"/>
        <dbReference type="ChEBI" id="CHEBI:133041"/>
        <dbReference type="EC" id="2.3.2.29"/>
    </reaction>
</comment>
<comment type="catalytic activity">
    <reaction evidence="1">
        <text>N-terminal L-aspartyl-[protein] + L-leucyl-tRNA(Leu) = N-terminal L-leucyl-L-aspartyl-[protein] + tRNA(Leu) + H(+)</text>
        <dbReference type="Rhea" id="RHEA:50420"/>
        <dbReference type="Rhea" id="RHEA-COMP:9613"/>
        <dbReference type="Rhea" id="RHEA-COMP:9622"/>
        <dbReference type="Rhea" id="RHEA-COMP:12669"/>
        <dbReference type="Rhea" id="RHEA-COMP:12674"/>
        <dbReference type="ChEBI" id="CHEBI:15378"/>
        <dbReference type="ChEBI" id="CHEBI:64720"/>
        <dbReference type="ChEBI" id="CHEBI:78442"/>
        <dbReference type="ChEBI" id="CHEBI:78494"/>
        <dbReference type="ChEBI" id="CHEBI:133042"/>
        <dbReference type="EC" id="2.3.2.29"/>
    </reaction>
</comment>
<comment type="subcellular location">
    <subcellularLocation>
        <location evidence="1">Cytoplasm</location>
    </subcellularLocation>
</comment>
<comment type="similarity">
    <text evidence="1">Belongs to the R-transferase family. Bpt subfamily.</text>
</comment>
<name>BPT_PSEF5</name>
<gene>
    <name evidence="1" type="primary">bpt</name>
    <name type="ordered locus">PFL_3883</name>
</gene>
<organism>
    <name type="scientific">Pseudomonas fluorescens (strain ATCC BAA-477 / NRRL B-23932 / Pf-5)</name>
    <dbReference type="NCBI Taxonomy" id="220664"/>
    <lineage>
        <taxon>Bacteria</taxon>
        <taxon>Pseudomonadati</taxon>
        <taxon>Pseudomonadota</taxon>
        <taxon>Gammaproteobacteria</taxon>
        <taxon>Pseudomonadales</taxon>
        <taxon>Pseudomonadaceae</taxon>
        <taxon>Pseudomonas</taxon>
    </lineage>
</organism>
<sequence>MTELARLKFYATQPHSCSYLPDEQATTLFLDPSQPMDVHVYADLSEMGFRRSGDHLYRPHCQNCNACVPARIPATQFLPSRQQKRIIKRNSDLTVHAAKPCFSEEYFDLYQRYIEQRHADGDMFPPSRDQFSTFLVRDLPFSRFYEFRLDGRLLAVAVTDLLPNGLSAVYTFYEPDEERRSLGRFAILWQIGETLRLGLDAVYLGYWIKNCKKMNYKTQYRPIELLVNQRWVILN</sequence>
<proteinExistence type="inferred from homology"/>
<dbReference type="EC" id="2.3.2.29" evidence="1"/>
<dbReference type="EMBL" id="CP000076">
    <property type="protein sequence ID" value="AAY93147.1"/>
    <property type="molecule type" value="Genomic_DNA"/>
</dbReference>
<dbReference type="RefSeq" id="WP_011062171.1">
    <property type="nucleotide sequence ID" value="NC_004129.6"/>
</dbReference>
<dbReference type="SMR" id="Q4K9V0"/>
<dbReference type="STRING" id="220664.PFL_3883"/>
<dbReference type="DNASU" id="3478267"/>
<dbReference type="KEGG" id="pfl:PFL_3883"/>
<dbReference type="PATRIC" id="fig|220664.5.peg.3978"/>
<dbReference type="eggNOG" id="COG2935">
    <property type="taxonomic scope" value="Bacteria"/>
</dbReference>
<dbReference type="HOGENOM" id="CLU_077607_0_0_6"/>
<dbReference type="Proteomes" id="UP000008540">
    <property type="component" value="Chromosome"/>
</dbReference>
<dbReference type="GO" id="GO:0005737">
    <property type="term" value="C:cytoplasm"/>
    <property type="evidence" value="ECO:0007669"/>
    <property type="project" value="UniProtKB-SubCell"/>
</dbReference>
<dbReference type="GO" id="GO:0004057">
    <property type="term" value="F:arginyl-tRNA--protein transferase activity"/>
    <property type="evidence" value="ECO:0007669"/>
    <property type="project" value="InterPro"/>
</dbReference>
<dbReference type="GO" id="GO:0008914">
    <property type="term" value="F:leucyl-tRNA--protein transferase activity"/>
    <property type="evidence" value="ECO:0007669"/>
    <property type="project" value="UniProtKB-UniRule"/>
</dbReference>
<dbReference type="GO" id="GO:0071596">
    <property type="term" value="P:ubiquitin-dependent protein catabolic process via the N-end rule pathway"/>
    <property type="evidence" value="ECO:0007669"/>
    <property type="project" value="InterPro"/>
</dbReference>
<dbReference type="HAMAP" id="MF_00689">
    <property type="entry name" value="Bpt"/>
    <property type="match status" value="1"/>
</dbReference>
<dbReference type="InterPro" id="IPR016181">
    <property type="entry name" value="Acyl_CoA_acyltransferase"/>
</dbReference>
<dbReference type="InterPro" id="IPR017138">
    <property type="entry name" value="Asp_Glu_LeuTrfase"/>
</dbReference>
<dbReference type="InterPro" id="IPR030700">
    <property type="entry name" value="N-end_Aminoacyl_Trfase"/>
</dbReference>
<dbReference type="InterPro" id="IPR007472">
    <property type="entry name" value="N-end_Aminoacyl_Trfase_C"/>
</dbReference>
<dbReference type="InterPro" id="IPR007471">
    <property type="entry name" value="N-end_Aminoacyl_Trfase_N"/>
</dbReference>
<dbReference type="NCBIfam" id="NF002341">
    <property type="entry name" value="PRK01305.1-1"/>
    <property type="match status" value="1"/>
</dbReference>
<dbReference type="NCBIfam" id="NF002342">
    <property type="entry name" value="PRK01305.1-3"/>
    <property type="match status" value="1"/>
</dbReference>
<dbReference type="NCBIfam" id="NF002345">
    <property type="entry name" value="PRK01305.2-2"/>
    <property type="match status" value="1"/>
</dbReference>
<dbReference type="NCBIfam" id="NF002346">
    <property type="entry name" value="PRK01305.2-3"/>
    <property type="match status" value="1"/>
</dbReference>
<dbReference type="PANTHER" id="PTHR21367">
    <property type="entry name" value="ARGININE-TRNA-PROTEIN TRANSFERASE 1"/>
    <property type="match status" value="1"/>
</dbReference>
<dbReference type="PANTHER" id="PTHR21367:SF1">
    <property type="entry name" value="ARGINYL-TRNA--PROTEIN TRANSFERASE 1"/>
    <property type="match status" value="1"/>
</dbReference>
<dbReference type="Pfam" id="PF04377">
    <property type="entry name" value="ATE_C"/>
    <property type="match status" value="1"/>
</dbReference>
<dbReference type="Pfam" id="PF04376">
    <property type="entry name" value="ATE_N"/>
    <property type="match status" value="1"/>
</dbReference>
<dbReference type="PIRSF" id="PIRSF037208">
    <property type="entry name" value="ATE_pro_prd"/>
    <property type="match status" value="1"/>
</dbReference>
<dbReference type="SUPFAM" id="SSF55729">
    <property type="entry name" value="Acyl-CoA N-acyltransferases (Nat)"/>
    <property type="match status" value="1"/>
</dbReference>
<keyword id="KW-0012">Acyltransferase</keyword>
<keyword id="KW-0963">Cytoplasm</keyword>
<keyword id="KW-0808">Transferase</keyword>
<reference key="1">
    <citation type="journal article" date="2005" name="Nat. Biotechnol.">
        <title>Complete genome sequence of the plant commensal Pseudomonas fluorescens Pf-5.</title>
        <authorList>
            <person name="Paulsen I.T."/>
            <person name="Press C.M."/>
            <person name="Ravel J."/>
            <person name="Kobayashi D.Y."/>
            <person name="Myers G.S.A."/>
            <person name="Mavrodi D.V."/>
            <person name="DeBoy R.T."/>
            <person name="Seshadri R."/>
            <person name="Ren Q."/>
            <person name="Madupu R."/>
            <person name="Dodson R.J."/>
            <person name="Durkin A.S."/>
            <person name="Brinkac L.M."/>
            <person name="Daugherty S.C."/>
            <person name="Sullivan S.A."/>
            <person name="Rosovitz M.J."/>
            <person name="Gwinn M.L."/>
            <person name="Zhou L."/>
            <person name="Schneider D.J."/>
            <person name="Cartinhour S.W."/>
            <person name="Nelson W.C."/>
            <person name="Weidman J."/>
            <person name="Watkins K."/>
            <person name="Tran K."/>
            <person name="Khouri H."/>
            <person name="Pierson E.A."/>
            <person name="Pierson L.S. III"/>
            <person name="Thomashow L.S."/>
            <person name="Loper J.E."/>
        </authorList>
    </citation>
    <scope>NUCLEOTIDE SEQUENCE [LARGE SCALE GENOMIC DNA]</scope>
    <source>
        <strain>ATCC BAA-477 / NRRL B-23932 / Pf-5</strain>
    </source>
</reference>
<feature type="chain" id="PRO_0000263201" description="Aspartate/glutamate leucyltransferase">
    <location>
        <begin position="1"/>
        <end position="235"/>
    </location>
</feature>
<evidence type="ECO:0000255" key="1">
    <source>
        <dbReference type="HAMAP-Rule" id="MF_00689"/>
    </source>
</evidence>